<evidence type="ECO:0000250" key="1">
    <source>
        <dbReference type="UniProtKB" id="P9WN05"/>
    </source>
</evidence>
<evidence type="ECO:0000255" key="2"/>
<evidence type="ECO:0000269" key="3">
    <source>
    </source>
</evidence>
<evidence type="ECO:0000303" key="4">
    <source>
    </source>
</evidence>
<evidence type="ECO:0000305" key="5"/>
<evidence type="ECO:0000305" key="6">
    <source>
    </source>
</evidence>
<evidence type="ECO:0000312" key="7">
    <source>
        <dbReference type="EMBL" id="ABK72177.1"/>
    </source>
</evidence>
<evidence type="ECO:0000312" key="8">
    <source>
        <dbReference type="EMBL" id="AFP41739.1"/>
    </source>
</evidence>
<name>PMT_MYCS2</name>
<gene>
    <name evidence="7" type="ordered locus">MSMEG_5447</name>
    <name evidence="8" type="ordered locus">MSMEI_5297</name>
</gene>
<protein>
    <recommendedName>
        <fullName evidence="5">Polyprenol-phosphate-mannose--protein mannosyltransferase</fullName>
        <ecNumber evidence="6">2.4.1.-</ecNumber>
    </recommendedName>
    <alternativeName>
        <fullName evidence="4">Protein O-mannosyltransferase</fullName>
        <shortName evidence="4">PMT</shortName>
    </alternativeName>
</protein>
<comment type="function">
    <text evidence="6">Protein O-mannosyltransferase that catalyzes the transfer of a single mannose residue from a polyprenol phospho-mannosyl lipidic donor to the hydroxyl group of selected serine and threonine residues in acceptor proteins.</text>
</comment>
<comment type="pathway">
    <text evidence="3">Protein modification; protein glycosylation.</text>
</comment>
<comment type="subcellular location">
    <subcellularLocation>
        <location evidence="1">Cell membrane</location>
        <topology evidence="2">Multi-pass membrane protein</topology>
    </subcellularLocation>
</comment>
<comment type="disruption phenotype">
    <text evidence="3">Not essential (PubMed:23550160). There is no significant difference in growth between the wild type and the insertion mutant (PubMed:23550160). Inactivation of the gene has little effect on metabolism or cell wall permeability to drugs (PubMed:23550160). In contrast, tolerance to cell wall stress induced by the SDS detergent is slightly reduced in the mutant (PubMed:23550160). Deletion of the gene leads to the loss of protein O-mannosylation (PubMed:23550160). The mutant phenotype is unaffected by the lack of manno-proteins (PubMed:23550160).</text>
</comment>
<comment type="similarity">
    <text evidence="5">Belongs to the glycosyltransferase 39 family.</text>
</comment>
<proteinExistence type="inferred from homology"/>
<reference evidence="7" key="1">
    <citation type="submission" date="2006-10" db="EMBL/GenBank/DDBJ databases">
        <authorList>
            <person name="Fleischmann R.D."/>
            <person name="Dodson R.J."/>
            <person name="Haft D.H."/>
            <person name="Merkel J.S."/>
            <person name="Nelson W.C."/>
            <person name="Fraser C.M."/>
        </authorList>
    </citation>
    <scope>NUCLEOTIDE SEQUENCE [LARGE SCALE GENOMIC DNA]</scope>
    <source>
        <strain>ATCC 700084 / mc(2)155</strain>
    </source>
</reference>
<reference evidence="8" key="2">
    <citation type="journal article" date="2007" name="Genome Biol.">
        <title>Interrupted coding sequences in Mycobacterium smegmatis: authentic mutations or sequencing errors?</title>
        <authorList>
            <person name="Deshayes C."/>
            <person name="Perrodou E."/>
            <person name="Gallien S."/>
            <person name="Euphrasie D."/>
            <person name="Schaeffer C."/>
            <person name="Van-Dorsselaer A."/>
            <person name="Poch O."/>
            <person name="Lecompte O."/>
            <person name="Reyrat J.-M."/>
        </authorList>
    </citation>
    <scope>NUCLEOTIDE SEQUENCE [LARGE SCALE GENOMIC DNA]</scope>
    <source>
        <strain>ATCC 700084 / mc(2)155</strain>
    </source>
</reference>
<reference evidence="8" key="3">
    <citation type="journal article" date="2009" name="Genome Res.">
        <title>Ortho-proteogenomics: multiple proteomes investigation through orthology and a new MS-based protocol.</title>
        <authorList>
            <person name="Gallien S."/>
            <person name="Perrodou E."/>
            <person name="Carapito C."/>
            <person name="Deshayes C."/>
            <person name="Reyrat J.-M."/>
            <person name="Van Dorsselaer A."/>
            <person name="Poch O."/>
            <person name="Schaeffer C."/>
            <person name="Lecompte O."/>
        </authorList>
    </citation>
    <scope>NUCLEOTIDE SEQUENCE [LARGE SCALE GENOMIC DNA]</scope>
    <source>
        <strain>ATCC 700084 / mc(2)155</strain>
    </source>
</reference>
<reference key="4">
    <citation type="journal article" date="2013" name="Proc. Natl. Acad. Sci. U.S.A.">
        <title>Bacterial protein-O-mannosylating enzyme is crucial for virulence of Mycobacterium tuberculosis.</title>
        <authorList>
            <person name="Liu C.F."/>
            <person name="Tonini L."/>
            <person name="Malaga W."/>
            <person name="Beau M."/>
            <person name="Stella A."/>
            <person name="Bouyssie D."/>
            <person name="Jackson M.C."/>
            <person name="Nigou J."/>
            <person name="Puzo G."/>
            <person name="Guilhot C."/>
            <person name="Burlet-Schiltz O."/>
            <person name="Riviere M."/>
        </authorList>
    </citation>
    <scope>FUNCTION</scope>
    <scope>PATHWAY</scope>
    <scope>DISRUPTION PHENOTYPE</scope>
    <source>
        <strain>ATCC 700084 / mc(2)155</strain>
    </source>
</reference>
<sequence>MTALDTDTPTAGRSAPLISPGPVIPPPDFGPLDRAQGWAMTAIITALAAITRFLNLGSPTDAGTPIFDEKHYAPQAWQVLHNDGVEDNPGYGLVVHPPVGKQLIAIGEWLFGYNGLGWRFSGAVCGVIIVMLVTRIARRISRSTLVGAIAGLLIIADGVSFVSSRTALLDVFLVMFAVAAFACLMVDRDQVRERMYHAFLDGRIAETRWGTRLGVRWWRFGAGVLLGLACATKWSGLYFVLFFGVMTLVFDAIARKQYHVPHPWRGMLRRDLGPAAYVFGLIPFAVYLASYAPWFASETAVNRYEVGRSIGPDSILPIPDALRSLWHYTHAAYRFHSNLTNADGNHHPWESKPWTWPMSLRPVLYAIDNQDVPGCGAQSCVKAVMLVGTPAMWFIAVPVLGWALWRTVVRRDWRYGAVLVGYMAGFLPWFADIDRQMYFFYATVMAPFLVLAIALILGDILYKPNQNPERRTLGLLTVCFYVALVITNFAWMYPILTGLPISQTTWNLQIWLPSWR</sequence>
<keyword id="KW-1003">Cell membrane</keyword>
<keyword id="KW-0328">Glycosyltransferase</keyword>
<keyword id="KW-0472">Membrane</keyword>
<keyword id="KW-1185">Reference proteome</keyword>
<keyword id="KW-0808">Transferase</keyword>
<keyword id="KW-0812">Transmembrane</keyword>
<keyword id="KW-1133">Transmembrane helix</keyword>
<accession>A0R3E8</accession>
<accession>I7GFC3</accession>
<dbReference type="EC" id="2.4.1.-" evidence="6"/>
<dbReference type="EMBL" id="CP000480">
    <property type="protein sequence ID" value="ABK72177.1"/>
    <property type="molecule type" value="Genomic_DNA"/>
</dbReference>
<dbReference type="EMBL" id="CP001663">
    <property type="protein sequence ID" value="AFP41739.1"/>
    <property type="molecule type" value="Genomic_DNA"/>
</dbReference>
<dbReference type="RefSeq" id="WP_011730541.1">
    <property type="nucleotide sequence ID" value="NZ_SIJM01000006.1"/>
</dbReference>
<dbReference type="RefSeq" id="YP_889686.1">
    <property type="nucleotide sequence ID" value="NC_008596.1"/>
</dbReference>
<dbReference type="STRING" id="246196.MSMEG_5447"/>
<dbReference type="CAZy" id="GT39">
    <property type="family name" value="Glycosyltransferase Family 39"/>
</dbReference>
<dbReference type="PaxDb" id="246196-MSMEI_5297"/>
<dbReference type="KEGG" id="msb:LJ00_26920"/>
<dbReference type="KEGG" id="msm:MSMEG_5447"/>
<dbReference type="PATRIC" id="fig|246196.19.peg.5308"/>
<dbReference type="eggNOG" id="COG4346">
    <property type="taxonomic scope" value="Bacteria"/>
</dbReference>
<dbReference type="OrthoDB" id="9776737at2"/>
<dbReference type="UniPathway" id="UPA00378"/>
<dbReference type="Proteomes" id="UP000000757">
    <property type="component" value="Chromosome"/>
</dbReference>
<dbReference type="Proteomes" id="UP000006158">
    <property type="component" value="Chromosome"/>
</dbReference>
<dbReference type="GO" id="GO:0012505">
    <property type="term" value="C:endomembrane system"/>
    <property type="evidence" value="ECO:0007669"/>
    <property type="project" value="UniProtKB-SubCell"/>
</dbReference>
<dbReference type="GO" id="GO:0005886">
    <property type="term" value="C:plasma membrane"/>
    <property type="evidence" value="ECO:0007669"/>
    <property type="project" value="UniProtKB-SubCell"/>
</dbReference>
<dbReference type="GO" id="GO:0004169">
    <property type="term" value="F:dolichyl-phosphate-mannose-protein mannosyltransferase activity"/>
    <property type="evidence" value="ECO:0007669"/>
    <property type="project" value="UniProtKB-UniRule"/>
</dbReference>
<dbReference type="InterPro" id="IPR027005">
    <property type="entry name" value="GlyclTrfase_39-like"/>
</dbReference>
<dbReference type="InterPro" id="IPR003342">
    <property type="entry name" value="Glyco_trans_39/83"/>
</dbReference>
<dbReference type="InterPro" id="IPR032421">
    <property type="entry name" value="PMT_4TMC"/>
</dbReference>
<dbReference type="PANTHER" id="PTHR10050">
    <property type="entry name" value="DOLICHYL-PHOSPHATE-MANNOSE--PROTEIN MANNOSYLTRANSFERASE"/>
    <property type="match status" value="1"/>
</dbReference>
<dbReference type="PANTHER" id="PTHR10050:SF46">
    <property type="entry name" value="PROTEIN O-MANNOSYL-TRANSFERASE 2"/>
    <property type="match status" value="1"/>
</dbReference>
<dbReference type="Pfam" id="PF02366">
    <property type="entry name" value="PMT"/>
    <property type="match status" value="1"/>
</dbReference>
<dbReference type="Pfam" id="PF16192">
    <property type="entry name" value="PMT_4TMC"/>
    <property type="match status" value="1"/>
</dbReference>
<organism>
    <name type="scientific">Mycolicibacterium smegmatis (strain ATCC 700084 / mc(2)155)</name>
    <name type="common">Mycobacterium smegmatis</name>
    <dbReference type="NCBI Taxonomy" id="246196"/>
    <lineage>
        <taxon>Bacteria</taxon>
        <taxon>Bacillati</taxon>
        <taxon>Actinomycetota</taxon>
        <taxon>Actinomycetes</taxon>
        <taxon>Mycobacteriales</taxon>
        <taxon>Mycobacteriaceae</taxon>
        <taxon>Mycolicibacterium</taxon>
    </lineage>
</organism>
<feature type="chain" id="PRO_0000462230" description="Polyprenol-phosphate-mannose--protein mannosyltransferase">
    <location>
        <begin position="1"/>
        <end position="516"/>
    </location>
</feature>
<feature type="transmembrane region" description="Helical" evidence="2">
    <location>
        <begin position="113"/>
        <end position="133"/>
    </location>
</feature>
<feature type="transmembrane region" description="Helical" evidence="2">
    <location>
        <begin position="143"/>
        <end position="163"/>
    </location>
</feature>
<feature type="transmembrane region" description="Helical" evidence="2">
    <location>
        <begin position="166"/>
        <end position="186"/>
    </location>
</feature>
<feature type="transmembrane region" description="Helical" evidence="2">
    <location>
        <begin position="234"/>
        <end position="254"/>
    </location>
</feature>
<feature type="transmembrane region" description="Helical" evidence="2">
    <location>
        <begin position="275"/>
        <end position="295"/>
    </location>
</feature>
<feature type="transmembrane region" description="Helical" evidence="2">
    <location>
        <begin position="384"/>
        <end position="404"/>
    </location>
</feature>
<feature type="transmembrane region" description="Helical" evidence="2">
    <location>
        <begin position="413"/>
        <end position="433"/>
    </location>
</feature>
<feature type="transmembrane region" description="Helical" evidence="2">
    <location>
        <begin position="437"/>
        <end position="457"/>
    </location>
</feature>
<feature type="transmembrane region" description="Helical" evidence="2">
    <location>
        <begin position="473"/>
        <end position="493"/>
    </location>
</feature>